<evidence type="ECO:0000255" key="1"/>
<evidence type="ECO:0000269" key="2">
    <source>
    </source>
</evidence>
<evidence type="ECO:0000269" key="3">
    <source>
    </source>
</evidence>
<evidence type="ECO:0000269" key="4">
    <source>
    </source>
</evidence>
<evidence type="ECO:0000269" key="5">
    <source ref="3"/>
</evidence>
<evidence type="ECO:0000269" key="6">
    <source ref="5"/>
</evidence>
<evidence type="ECO:0000303" key="7">
    <source>
    </source>
</evidence>
<evidence type="ECO:0000303" key="8">
    <source ref="5"/>
</evidence>
<evidence type="ECO:0000305" key="9"/>
<evidence type="ECO:0000305" key="10">
    <source>
    </source>
</evidence>
<evidence type="ECO:0000305" key="11">
    <source>
    </source>
</evidence>
<sequence length="83" mass="9209">MKASMFLALAGLVLLFVVGYASESEEKEFPRELLSKIFALDDFKGEERGCKGFGDSCTPGKNECCPNYACSSKHKWCKVYLGK</sequence>
<protein>
    <recommendedName>
        <fullName evidence="7 8">Hainantoxin-III</fullName>
        <shortName evidence="7 8">HnTx-III</shortName>
    </recommendedName>
    <alternativeName>
        <fullName>Hainantoxin-3.3</fullName>
    </alternativeName>
    <alternativeName>
        <fullName>Mu-theraphotoxin-Hhn2a</fullName>
        <shortName>Mu-TRTX-Hhn2a</shortName>
    </alternativeName>
    <alternativeName>
        <fullName>Peptide F7-18.76</fullName>
    </alternativeName>
</protein>
<proteinExistence type="evidence at protein level"/>
<reference key="1">
    <citation type="journal article" date="2010" name="J. Proteome Res.">
        <title>Molecular diversification of peptide toxins from the tarantula Haplopelma hainanum (Ornithoctonus hainana) venom based on transcriptomic, peptidomic, and genomic analyses.</title>
        <authorList>
            <person name="Tang X."/>
            <person name="Zhang Y."/>
            <person name="Hu W."/>
            <person name="Xu D."/>
            <person name="Tao H."/>
            <person name="Yang X."/>
            <person name="Li Y."/>
            <person name="Jiang L."/>
            <person name="Liang S."/>
        </authorList>
    </citation>
    <scope>NUCLEOTIDE SEQUENCE [LARGE SCALE MRNA]</scope>
    <scope>PROTEIN SEQUENCE OF 49-81</scope>
    <scope>IDENTIFICATION BY MASS SPECTROMETRY</scope>
    <source>
        <tissue>Venom</tissue>
        <tissue>Venom gland</tissue>
    </source>
</reference>
<reference key="2">
    <citation type="journal article" date="2003" name="Eur. J. Pharmacol.">
        <title>Inhibition of neuronal tetrodotoxin-sensitive Na+ channels by two spider toxins: hainantoxin-III and hainantoxin-IV.</title>
        <authorList>
            <person name="Xiao Y."/>
            <person name="Liang S."/>
        </authorList>
    </citation>
    <scope>PROTEIN SEQUENCE OF 49-81</scope>
    <scope>FUNCTION</scope>
    <scope>SUBCELLULAR LOCATION</scope>
    <scope>AMIDATION AT LEU-81</scope>
    <source>
        <tissue>Venom</tissue>
    </source>
</reference>
<reference key="3">
    <citation type="submission" date="2002-10" db="UniProtKB">
        <title>Function and solution structure of hainantoxin-III, a potent neuronal TTX-sensitive sodium channel antagonist from Chinese bird spider Selenocosmia hainana.</title>
        <authorList>
            <person name="Zhu Q."/>
            <person name="Liu Z.-H."/>
            <person name="Liang S.-P."/>
        </authorList>
    </citation>
    <scope>SUBUNIT</scope>
    <scope>MASS SPECTROMETRY</scope>
</reference>
<reference key="4">
    <citation type="journal article" date="2013" name="J. Biol. Chem.">
        <title>Structure and function of hainantoxin-III, a selective antagonist of neuronal tetrodotoxin-sensitive voltage-gated sodium channels isolated from the Chinese bird spider Ornithoctonus hainana.</title>
        <authorList>
            <person name="Liu Z."/>
            <person name="Cai T."/>
            <person name="Zhu Q."/>
            <person name="Deng M."/>
            <person name="Li J."/>
            <person name="Zhou X."/>
            <person name="Zhang F."/>
            <person name="Li D."/>
            <person name="Li J."/>
            <person name="Liu Y."/>
            <person name="Hu W."/>
            <person name="Liang S."/>
        </authorList>
    </citation>
    <scope>FUNCTION</scope>
    <scope>SUBCELLULAR LOCATION</scope>
    <scope>STRUCTURE BY NMR OF 49-81</scope>
    <scope>DISULFIDE BONDS</scope>
    <source>
        <tissue>Venom</tissue>
    </source>
</reference>
<reference key="5">
    <citation type="submission" date="2007-07" db="PDB data bank">
        <title>Three dimensional solution structure of hainantoxin-III by 2D 1H-NMR.</title>
        <authorList>
            <person name="Zhu Q."/>
            <person name="Liu Z."/>
            <person name="Liang S."/>
        </authorList>
    </citation>
    <scope>STRUCTURE BY NMR OF 49-81</scope>
    <scope>DISULFIDE BONDS</scope>
</reference>
<comment type="function">
    <text evidence="4">Selective antagonist of neuronal tetrodotoxin (TTX)-sensitive voltage-gated sodium channels (IC(50)=1270 nM on Nav1.1/SCN1A, 270 nM on Nav1.2/SCN2A, 491 nM on Nav1.3/SCN3A and 232 nM on Nav1.7/SCN9A). This toxin suppress Nav1.7 current amplitude without significantly altering the activation, inactivation, and repriming kinetics. Short extreme depolarizations partially activate the toxin-bound channel, indicating voltage-dependent inhibition of this toxin. This toxin increases the deactivation of the Nav1.7 current after extreme depolarizations. The toxin-Nav1.7 complex is gradually dissociated upon prolonged strong depolarizations in a voltage-dependent manner, and the unbound toxin rebinds to Nav1.7 after a long repolarization. Moreover, analysis of chimeric channels showed that the DIIS3-S4 linker is critical for toxin binding to Nav1.7. These data are consistent with this toxin interacting with Nav1.7 site 4 and trapping the domain II voltage sensor in the closed state.</text>
</comment>
<comment type="subunit">
    <text evidence="5">Monomer.</text>
</comment>
<comment type="subcellular location">
    <subcellularLocation>
        <location evidence="2 4">Secreted</location>
    </subcellularLocation>
</comment>
<comment type="tissue specificity">
    <text evidence="10 11">Expressed by the venom gland.</text>
</comment>
<comment type="domain">
    <text evidence="4">The presence of a 'disulfide through disulfide knot' structurally defines this protein as a knottin.</text>
</comment>
<comment type="mass spectrometry" mass="3607.6" method="Electrospray" evidence="5"/>
<comment type="miscellaneous">
    <text evidence="2 4">Negative results: has no activity on Nav1.4, Nav1.5, Nav1.8 and Nav1.9 sodium and calcium currents.</text>
</comment>
<comment type="similarity">
    <text evidence="9">Belongs to the neurotoxin 10 (Hwtx-1) family. 15 (Hntx-3) subfamily.</text>
</comment>
<comment type="caution">
    <text evidence="9">Several genes are coding for this toxin for which the structure by NMR has been determined. The cross-references to PDB and additional information can be found in entry AC D2Y1X9.</text>
</comment>
<organism>
    <name type="scientific">Cyriopagopus hainanus</name>
    <name type="common">Chinese bird spider</name>
    <name type="synonym">Haplopelma hainanum</name>
    <dbReference type="NCBI Taxonomy" id="209901"/>
    <lineage>
        <taxon>Eukaryota</taxon>
        <taxon>Metazoa</taxon>
        <taxon>Ecdysozoa</taxon>
        <taxon>Arthropoda</taxon>
        <taxon>Chelicerata</taxon>
        <taxon>Arachnida</taxon>
        <taxon>Araneae</taxon>
        <taxon>Mygalomorphae</taxon>
        <taxon>Theraphosidae</taxon>
        <taxon>Haplopelma</taxon>
    </lineage>
</organism>
<name>H3A03_CYRHA</name>
<feature type="signal peptide" evidence="1">
    <location>
        <begin position="1"/>
        <end position="21"/>
    </location>
</feature>
<feature type="propeptide" id="PRO_0000400508" evidence="2 3">
    <location>
        <begin position="22"/>
        <end position="48"/>
    </location>
</feature>
<feature type="peptide" id="PRO_0000400509" description="Hainantoxin-III" evidence="2 3">
    <location>
        <begin position="49"/>
        <end position="81"/>
    </location>
</feature>
<feature type="modified residue" description="Leucine amide" evidence="2">
    <location>
        <position position="81"/>
    </location>
</feature>
<feature type="disulfide bond" evidence="4 6">
    <location>
        <begin position="50"/>
        <end position="65"/>
    </location>
</feature>
<feature type="disulfide bond" evidence="4 6">
    <location>
        <begin position="57"/>
        <end position="70"/>
    </location>
</feature>
<feature type="disulfide bond" evidence="4 6">
    <location>
        <begin position="64"/>
        <end position="77"/>
    </location>
</feature>
<accession>D2Y1Y1</accession>
<accession>P83464</accession>
<keyword id="KW-0027">Amidation</keyword>
<keyword id="KW-0903">Direct protein sequencing</keyword>
<keyword id="KW-1015">Disulfide bond</keyword>
<keyword id="KW-0872">Ion channel impairing toxin</keyword>
<keyword id="KW-0960">Knottin</keyword>
<keyword id="KW-0528">Neurotoxin</keyword>
<keyword id="KW-0638">Presynaptic neurotoxin</keyword>
<keyword id="KW-0964">Secreted</keyword>
<keyword id="KW-0732">Signal</keyword>
<keyword id="KW-0800">Toxin</keyword>
<keyword id="KW-0738">Voltage-gated sodium channel impairing toxin</keyword>
<dbReference type="EMBL" id="GU292858">
    <property type="protein sequence ID" value="ADB56674.1"/>
    <property type="molecule type" value="mRNA"/>
</dbReference>
<dbReference type="SMR" id="D2Y1Y1"/>
<dbReference type="ArachnoServer" id="AS000339">
    <property type="toxin name" value="mu-theraphotoxin-Hhn2a"/>
</dbReference>
<dbReference type="GO" id="GO:0005576">
    <property type="term" value="C:extracellular region"/>
    <property type="evidence" value="ECO:0007669"/>
    <property type="project" value="UniProtKB-SubCell"/>
</dbReference>
<dbReference type="GO" id="GO:0044231">
    <property type="term" value="C:host cell presynaptic membrane"/>
    <property type="evidence" value="ECO:0007669"/>
    <property type="project" value="UniProtKB-KW"/>
</dbReference>
<dbReference type="GO" id="GO:0008200">
    <property type="term" value="F:ion channel inhibitor activity"/>
    <property type="evidence" value="ECO:0007669"/>
    <property type="project" value="InterPro"/>
</dbReference>
<dbReference type="GO" id="GO:0017080">
    <property type="term" value="F:sodium channel regulator activity"/>
    <property type="evidence" value="ECO:0007669"/>
    <property type="project" value="UniProtKB-KW"/>
</dbReference>
<dbReference type="GO" id="GO:0090729">
    <property type="term" value="F:toxin activity"/>
    <property type="evidence" value="ECO:0007669"/>
    <property type="project" value="UniProtKB-KW"/>
</dbReference>
<dbReference type="InterPro" id="IPR011696">
    <property type="entry name" value="Huwentoxin-1"/>
</dbReference>
<dbReference type="InterPro" id="IPR013140">
    <property type="entry name" value="Huwentoxin_CS1"/>
</dbReference>
<dbReference type="Pfam" id="PF07740">
    <property type="entry name" value="Toxin_12"/>
    <property type="match status" value="1"/>
</dbReference>
<dbReference type="SUPFAM" id="SSF57059">
    <property type="entry name" value="omega toxin-like"/>
    <property type="match status" value="1"/>
</dbReference>
<dbReference type="PROSITE" id="PS60021">
    <property type="entry name" value="HWTX_1"/>
    <property type="match status" value="1"/>
</dbReference>